<keyword id="KW-0131">Cell cycle</keyword>
<keyword id="KW-0132">Cell division</keyword>
<keyword id="KW-1185">Reference proteome</keyword>
<comment type="function">
    <text evidence="1">Prevents the cell division inhibition by proteins MinC and MinD at internal division sites while permitting inhibition at polar sites. This ensures cell division at the proper site by restricting the formation of a division septum at the midpoint of the long axis of the cell.</text>
</comment>
<comment type="similarity">
    <text evidence="1">Belongs to the MinE family.</text>
</comment>
<protein>
    <recommendedName>
        <fullName evidence="1">Cell division topological specificity factor</fullName>
    </recommendedName>
</protein>
<organism>
    <name type="scientific">Sorangium cellulosum (strain So ce56)</name>
    <name type="common">Polyangium cellulosum (strain So ce56)</name>
    <dbReference type="NCBI Taxonomy" id="448385"/>
    <lineage>
        <taxon>Bacteria</taxon>
        <taxon>Pseudomonadati</taxon>
        <taxon>Myxococcota</taxon>
        <taxon>Polyangia</taxon>
        <taxon>Polyangiales</taxon>
        <taxon>Polyangiaceae</taxon>
        <taxon>Sorangium</taxon>
    </lineage>
</organism>
<accession>A9GN39</accession>
<evidence type="ECO:0000255" key="1">
    <source>
        <dbReference type="HAMAP-Rule" id="MF_00262"/>
    </source>
</evidence>
<proteinExistence type="inferred from homology"/>
<dbReference type="EMBL" id="AM746676">
    <property type="protein sequence ID" value="CAN93526.1"/>
    <property type="molecule type" value="Genomic_DNA"/>
</dbReference>
<dbReference type="RefSeq" id="WP_012235998.1">
    <property type="nucleotide sequence ID" value="NC_010162.1"/>
</dbReference>
<dbReference type="SMR" id="A9GN39"/>
<dbReference type="STRING" id="448385.sce3367"/>
<dbReference type="KEGG" id="scl:sce3367"/>
<dbReference type="eggNOG" id="COG0851">
    <property type="taxonomic scope" value="Bacteria"/>
</dbReference>
<dbReference type="HOGENOM" id="CLU_137929_2_2_7"/>
<dbReference type="OrthoDB" id="9802655at2"/>
<dbReference type="BioCyc" id="SCEL448385:SCE_RS17250-MONOMER"/>
<dbReference type="Proteomes" id="UP000002139">
    <property type="component" value="Chromosome"/>
</dbReference>
<dbReference type="GO" id="GO:0051301">
    <property type="term" value="P:cell division"/>
    <property type="evidence" value="ECO:0007669"/>
    <property type="project" value="UniProtKB-KW"/>
</dbReference>
<dbReference type="GO" id="GO:0032955">
    <property type="term" value="P:regulation of division septum assembly"/>
    <property type="evidence" value="ECO:0007669"/>
    <property type="project" value="InterPro"/>
</dbReference>
<dbReference type="FunFam" id="3.30.1070.10:FF:000001">
    <property type="entry name" value="Cell division topological specificity factor"/>
    <property type="match status" value="1"/>
</dbReference>
<dbReference type="Gene3D" id="3.30.1070.10">
    <property type="entry name" value="Cell division topological specificity factor MinE"/>
    <property type="match status" value="1"/>
</dbReference>
<dbReference type="HAMAP" id="MF_00262">
    <property type="entry name" value="MinE"/>
    <property type="match status" value="1"/>
</dbReference>
<dbReference type="InterPro" id="IPR005527">
    <property type="entry name" value="MinE"/>
</dbReference>
<dbReference type="InterPro" id="IPR036707">
    <property type="entry name" value="MinE_sf"/>
</dbReference>
<dbReference type="NCBIfam" id="TIGR01215">
    <property type="entry name" value="minE"/>
    <property type="match status" value="1"/>
</dbReference>
<dbReference type="NCBIfam" id="NF001422">
    <property type="entry name" value="PRK00296.1"/>
    <property type="match status" value="1"/>
</dbReference>
<dbReference type="Pfam" id="PF03776">
    <property type="entry name" value="MinE"/>
    <property type="match status" value="1"/>
</dbReference>
<dbReference type="SUPFAM" id="SSF55229">
    <property type="entry name" value="Cell division protein MinE topological specificity domain"/>
    <property type="match status" value="1"/>
</dbReference>
<gene>
    <name evidence="1" type="primary">minE</name>
    <name type="ordered locus">sce3367</name>
</gene>
<feature type="chain" id="PRO_1000078650" description="Cell division topological specificity factor">
    <location>
        <begin position="1"/>
        <end position="104"/>
    </location>
</feature>
<reference key="1">
    <citation type="journal article" date="2007" name="Nat. Biotechnol.">
        <title>Complete genome sequence of the myxobacterium Sorangium cellulosum.</title>
        <authorList>
            <person name="Schneiker S."/>
            <person name="Perlova O."/>
            <person name="Kaiser O."/>
            <person name="Gerth K."/>
            <person name="Alici A."/>
            <person name="Altmeyer M.O."/>
            <person name="Bartels D."/>
            <person name="Bekel T."/>
            <person name="Beyer S."/>
            <person name="Bode E."/>
            <person name="Bode H.B."/>
            <person name="Bolten C.J."/>
            <person name="Choudhuri J.V."/>
            <person name="Doss S."/>
            <person name="Elnakady Y.A."/>
            <person name="Frank B."/>
            <person name="Gaigalat L."/>
            <person name="Goesmann A."/>
            <person name="Groeger C."/>
            <person name="Gross F."/>
            <person name="Jelsbak L."/>
            <person name="Jelsbak L."/>
            <person name="Kalinowski J."/>
            <person name="Kegler C."/>
            <person name="Knauber T."/>
            <person name="Konietzny S."/>
            <person name="Kopp M."/>
            <person name="Krause L."/>
            <person name="Krug D."/>
            <person name="Linke B."/>
            <person name="Mahmud T."/>
            <person name="Martinez-Arias R."/>
            <person name="McHardy A.C."/>
            <person name="Merai M."/>
            <person name="Meyer F."/>
            <person name="Mormann S."/>
            <person name="Munoz-Dorado J."/>
            <person name="Perez J."/>
            <person name="Pradella S."/>
            <person name="Rachid S."/>
            <person name="Raddatz G."/>
            <person name="Rosenau F."/>
            <person name="Rueckert C."/>
            <person name="Sasse F."/>
            <person name="Scharfe M."/>
            <person name="Schuster S.C."/>
            <person name="Suen G."/>
            <person name="Treuner-Lange A."/>
            <person name="Velicer G.J."/>
            <person name="Vorholter F.-J."/>
            <person name="Weissman K.J."/>
            <person name="Welch R.D."/>
            <person name="Wenzel S.C."/>
            <person name="Whitworth D.E."/>
            <person name="Wilhelm S."/>
            <person name="Wittmann C."/>
            <person name="Bloecker H."/>
            <person name="Puehler A."/>
            <person name="Mueller R."/>
        </authorList>
    </citation>
    <scope>NUCLEOTIDE SEQUENCE [LARGE SCALE GENOMIC DNA]</scope>
    <source>
        <strain>So ce56</strain>
    </source>
</reference>
<sequence length="104" mass="11646">MSIMDYFRRSQPKSATVAKERLQIIVARERARPTGEPDYLPRLKQELLQVISKYERIDLDQVSVNVERSGDCDVLELNVVLSESERAAVRAAASRAGAAAVRNC</sequence>
<name>MINE_SORC5</name>